<comment type="interaction">
    <interactant intactId="EBI-12911102">
        <id>Q8WXT5</id>
    </interactant>
    <interactant intactId="EBI-726739">
        <id>Q9UPY8</id>
        <label>MAPRE3</label>
    </interactant>
    <organismsDiffer>false</organismsDiffer>
    <experiments>3</experiments>
</comment>
<comment type="subcellular location">
    <subcellularLocation>
        <location evidence="1">Nucleus</location>
    </subcellularLocation>
</comment>
<evidence type="ECO:0000255" key="1">
    <source>
        <dbReference type="PROSITE-ProRule" id="PRU00089"/>
    </source>
</evidence>
<evidence type="ECO:0000256" key="2">
    <source>
        <dbReference type="SAM" id="MobiDB-lite"/>
    </source>
</evidence>
<evidence type="ECO:0000303" key="3">
    <source>
    </source>
</evidence>
<evidence type="ECO:0000305" key="4"/>
<evidence type="ECO:0000305" key="5">
    <source>
    </source>
</evidence>
<evidence type="ECO:0000312" key="6">
    <source>
        <dbReference type="EMBL" id="AAL73342.1"/>
    </source>
</evidence>
<evidence type="ECO:0000312" key="7">
    <source>
        <dbReference type="HGNC" id="HGNC:23762"/>
    </source>
</evidence>
<dbReference type="EMBL" id="AF343005">
    <property type="protein sequence ID" value="AAL73342.1"/>
    <property type="molecule type" value="Genomic_DNA"/>
</dbReference>
<dbReference type="EMBL" id="AY344641">
    <property type="protein sequence ID" value="AAQ76879.1"/>
    <property type="molecule type" value="mRNA"/>
</dbReference>
<dbReference type="EMBL" id="BX284632">
    <property type="status" value="NOT_ANNOTATED_CDS"/>
    <property type="molecule type" value="Genomic_DNA"/>
</dbReference>
<dbReference type="CCDS" id="CCDS75845.1"/>
<dbReference type="RefSeq" id="NP_954714.2">
    <property type="nucleotide sequence ID" value="NM_199244.3"/>
</dbReference>
<dbReference type="SMR" id="Q8WXT5"/>
<dbReference type="BioGRID" id="131556">
    <property type="interactions" value="1"/>
</dbReference>
<dbReference type="FunCoup" id="Q8WXT5">
    <property type="interactions" value="2"/>
</dbReference>
<dbReference type="IntAct" id="Q8WXT5">
    <property type="interactions" value="1"/>
</dbReference>
<dbReference type="STRING" id="9606.ENSP00000366630"/>
<dbReference type="GlyGen" id="Q8WXT5">
    <property type="glycosylation" value="1 site"/>
</dbReference>
<dbReference type="BioMuta" id="FOXD4L4"/>
<dbReference type="DMDM" id="158518651"/>
<dbReference type="jPOST" id="Q8WXT5"/>
<dbReference type="MassIVE" id="Q8WXT5"/>
<dbReference type="PaxDb" id="9606-ENSP00000366630"/>
<dbReference type="PeptideAtlas" id="Q8WXT5"/>
<dbReference type="Antibodypedia" id="76484">
    <property type="antibodies" value="1 antibodies from 1 providers"/>
</dbReference>
<dbReference type="DNASU" id="349334"/>
<dbReference type="Ensembl" id="ENST00000377413.3">
    <property type="protein sequence ID" value="ENSP00000366630.1"/>
    <property type="gene ID" value="ENSG00000184659.6"/>
</dbReference>
<dbReference type="GeneID" id="349334"/>
<dbReference type="KEGG" id="hsa:349334"/>
<dbReference type="MANE-Select" id="ENST00000377413.3">
    <property type="protein sequence ID" value="ENSP00000366630.1"/>
    <property type="RefSeq nucleotide sequence ID" value="NM_199244.3"/>
    <property type="RefSeq protein sequence ID" value="NP_954714.2"/>
</dbReference>
<dbReference type="UCSC" id="uc004afx.2">
    <property type="organism name" value="human"/>
</dbReference>
<dbReference type="AGR" id="HGNC:23762"/>
<dbReference type="CTD" id="349334"/>
<dbReference type="DisGeNET" id="349334"/>
<dbReference type="GeneCards" id="FOXD4L4"/>
<dbReference type="HGNC" id="HGNC:23762">
    <property type="gene designation" value="FOXD4L4"/>
</dbReference>
<dbReference type="HPA" id="ENSG00000184659">
    <property type="expression patterns" value="Not detected"/>
</dbReference>
<dbReference type="MIM" id="611085">
    <property type="type" value="gene"/>
</dbReference>
<dbReference type="neXtProt" id="NX_Q8WXT5"/>
<dbReference type="OpenTargets" id="ENSG00000184659"/>
<dbReference type="PharmGKB" id="PA142671752"/>
<dbReference type="VEuPathDB" id="HostDB:ENSG00000184659"/>
<dbReference type="eggNOG" id="KOG2294">
    <property type="taxonomic scope" value="Eukaryota"/>
</dbReference>
<dbReference type="GeneTree" id="ENSGT00940000163353"/>
<dbReference type="HOGENOM" id="CLU_040357_3_1_1"/>
<dbReference type="InParanoid" id="Q8WXT5"/>
<dbReference type="OMA" id="SCICAFI"/>
<dbReference type="OrthoDB" id="9537367at2759"/>
<dbReference type="PAN-GO" id="Q8WXT5">
    <property type="GO annotations" value="5 GO annotations based on evolutionary models"/>
</dbReference>
<dbReference type="PhylomeDB" id="Q8WXT5"/>
<dbReference type="TreeFam" id="TF316127"/>
<dbReference type="PathwayCommons" id="Q8WXT5"/>
<dbReference type="SignaLink" id="Q8WXT5"/>
<dbReference type="BioGRID-ORCS" id="349334">
    <property type="hits" value="59 hits in 673 CRISPR screens"/>
</dbReference>
<dbReference type="GenomeRNAi" id="349334"/>
<dbReference type="Pharos" id="Q8WXT5">
    <property type="development level" value="Tdark"/>
</dbReference>
<dbReference type="PRO" id="PR:Q8WXT5"/>
<dbReference type="Proteomes" id="UP000005640">
    <property type="component" value="Chromosome 9"/>
</dbReference>
<dbReference type="RNAct" id="Q8WXT5">
    <property type="molecule type" value="protein"/>
</dbReference>
<dbReference type="Bgee" id="ENSG00000184659">
    <property type="expression patterns" value="Expressed in right uterine tube and 35 other cell types or tissues"/>
</dbReference>
<dbReference type="GO" id="GO:0000785">
    <property type="term" value="C:chromatin"/>
    <property type="evidence" value="ECO:0000247"/>
    <property type="project" value="NTNU_SB"/>
</dbReference>
<dbReference type="GO" id="GO:0005634">
    <property type="term" value="C:nucleus"/>
    <property type="evidence" value="ECO:0007669"/>
    <property type="project" value="UniProtKB-SubCell"/>
</dbReference>
<dbReference type="GO" id="GO:0000981">
    <property type="term" value="F:DNA-binding transcription factor activity, RNA polymerase II-specific"/>
    <property type="evidence" value="ECO:0000247"/>
    <property type="project" value="NTNU_SB"/>
</dbReference>
<dbReference type="GO" id="GO:0000978">
    <property type="term" value="F:RNA polymerase II cis-regulatory region sequence-specific DNA binding"/>
    <property type="evidence" value="ECO:0000318"/>
    <property type="project" value="GO_Central"/>
</dbReference>
<dbReference type="GO" id="GO:0009653">
    <property type="term" value="P:anatomical structure morphogenesis"/>
    <property type="evidence" value="ECO:0000318"/>
    <property type="project" value="GO_Central"/>
</dbReference>
<dbReference type="GO" id="GO:0030154">
    <property type="term" value="P:cell differentiation"/>
    <property type="evidence" value="ECO:0000318"/>
    <property type="project" value="GO_Central"/>
</dbReference>
<dbReference type="GO" id="GO:0006357">
    <property type="term" value="P:regulation of transcription by RNA polymerase II"/>
    <property type="evidence" value="ECO:0000318"/>
    <property type="project" value="GO_Central"/>
</dbReference>
<dbReference type="CDD" id="cd20048">
    <property type="entry name" value="FH_FOXD4-like"/>
    <property type="match status" value="1"/>
</dbReference>
<dbReference type="FunFam" id="1.10.10.10:FF:000071">
    <property type="entry name" value="Forkhead box F1"/>
    <property type="match status" value="1"/>
</dbReference>
<dbReference type="Gene3D" id="1.10.10.10">
    <property type="entry name" value="Winged helix-like DNA-binding domain superfamily/Winged helix DNA-binding domain"/>
    <property type="match status" value="1"/>
</dbReference>
<dbReference type="InterPro" id="IPR001766">
    <property type="entry name" value="Fork_head_dom"/>
</dbReference>
<dbReference type="InterPro" id="IPR050211">
    <property type="entry name" value="FOX_domain-containing"/>
</dbReference>
<dbReference type="InterPro" id="IPR018122">
    <property type="entry name" value="TF_fork_head_CS_1"/>
</dbReference>
<dbReference type="InterPro" id="IPR030456">
    <property type="entry name" value="TF_fork_head_CS_2"/>
</dbReference>
<dbReference type="InterPro" id="IPR036388">
    <property type="entry name" value="WH-like_DNA-bd_sf"/>
</dbReference>
<dbReference type="InterPro" id="IPR036390">
    <property type="entry name" value="WH_DNA-bd_sf"/>
</dbReference>
<dbReference type="PANTHER" id="PTHR11829">
    <property type="entry name" value="FORKHEAD BOX PROTEIN"/>
    <property type="match status" value="1"/>
</dbReference>
<dbReference type="PANTHER" id="PTHR11829:SF396">
    <property type="entry name" value="FORKHEAD BOX PROTEIN D4-LIKE 3-RELATED"/>
    <property type="match status" value="1"/>
</dbReference>
<dbReference type="Pfam" id="PF00250">
    <property type="entry name" value="Forkhead"/>
    <property type="match status" value="1"/>
</dbReference>
<dbReference type="PRINTS" id="PR00053">
    <property type="entry name" value="FORKHEAD"/>
</dbReference>
<dbReference type="SMART" id="SM00339">
    <property type="entry name" value="FH"/>
    <property type="match status" value="1"/>
</dbReference>
<dbReference type="SUPFAM" id="SSF46785">
    <property type="entry name" value="Winged helix' DNA-binding domain"/>
    <property type="match status" value="1"/>
</dbReference>
<dbReference type="PROSITE" id="PS00657">
    <property type="entry name" value="FORK_HEAD_1"/>
    <property type="match status" value="1"/>
</dbReference>
<dbReference type="PROSITE" id="PS00658">
    <property type="entry name" value="FORK_HEAD_2"/>
    <property type="match status" value="1"/>
</dbReference>
<dbReference type="PROSITE" id="PS50039">
    <property type="entry name" value="FORK_HEAD_3"/>
    <property type="match status" value="1"/>
</dbReference>
<name>FX4L4_HUMAN</name>
<proteinExistence type="evidence at protein level"/>
<accession>Q8WXT5</accession>
<accession>Q5RIB4</accession>
<accession>Q6VB85</accession>
<organism>
    <name type="scientific">Homo sapiens</name>
    <name type="common">Human</name>
    <dbReference type="NCBI Taxonomy" id="9606"/>
    <lineage>
        <taxon>Eukaryota</taxon>
        <taxon>Metazoa</taxon>
        <taxon>Chordata</taxon>
        <taxon>Craniata</taxon>
        <taxon>Vertebrata</taxon>
        <taxon>Euteleostomi</taxon>
        <taxon>Mammalia</taxon>
        <taxon>Eutheria</taxon>
        <taxon>Euarchontoglires</taxon>
        <taxon>Primates</taxon>
        <taxon>Haplorrhini</taxon>
        <taxon>Catarrhini</taxon>
        <taxon>Hominidae</taxon>
        <taxon>Homo</taxon>
    </lineage>
</organism>
<gene>
    <name evidence="7" type="primary">FOXD4L4</name>
    <name evidence="3" type="synonym">FOXD4B</name>
    <name evidence="7" type="synonym">FOXD4L2</name>
</gene>
<sequence>MNLPRAERPRSTPQRSLRDSDGEDGKIDVLGEEEDEDEVEDEEEEARQQFLEQSLQPGLQVARWGGVALPREHIEGGGGPSDPSEFGTKFRAPPRSAAASEDARQPAKPPYSYIALITMAILQNPHKRLTLSGICAFISGRFPYYRRKFPAWQNSIRHNLSLNDCFVKIPREPGHPGKGNYWSLDPASQDMFDNGSFLRRRKRFKRHQLTPGAHLPHPFPLPAAHAALHNPHPGPLLGAPAPPQPVPGAYPNTAPGRRPYALLHPHPLRYLLLSARVYAGAPKKAEGADLATPAPFPCCSPHLVLSLGRRARVWRRHREADASLSALRVLCKGSGERVQGLRRVCPRPRGATATCSSDHQACCIPKPLPLCCKCPPPLLLGQFCSNSSSIRRTAPTAALPPRARCWAGTCRPRRRC</sequence>
<protein>
    <recommendedName>
        <fullName evidence="4">Forkhead box protein D4-like 4</fullName>
        <shortName evidence="4">FOXD4-like 4</shortName>
    </recommendedName>
    <alternativeName>
        <fullName evidence="7">Forkhead box protein D4-like 2</fullName>
    </alternativeName>
    <alternativeName>
        <fullName evidence="5">Forkhead box protein D4B</fullName>
    </alternativeName>
    <alternativeName>
        <fullName evidence="6">Myeloid factor-gamma</fullName>
    </alternativeName>
</protein>
<feature type="chain" id="PRO_0000091825" description="Forkhead box protein D4-like 4">
    <location>
        <begin position="1"/>
        <end position="416"/>
    </location>
</feature>
<feature type="DNA-binding region" description="Fork-head" evidence="1">
    <location>
        <begin position="108"/>
        <end position="202"/>
    </location>
</feature>
<feature type="region of interest" description="Disordered" evidence="2">
    <location>
        <begin position="1"/>
        <end position="55"/>
    </location>
</feature>
<feature type="region of interest" description="Disordered" evidence="2">
    <location>
        <begin position="70"/>
        <end position="105"/>
    </location>
</feature>
<feature type="compositionally biased region" description="Basic and acidic residues" evidence="2">
    <location>
        <begin position="1"/>
        <end position="29"/>
    </location>
</feature>
<feature type="compositionally biased region" description="Acidic residues" evidence="2">
    <location>
        <begin position="30"/>
        <end position="45"/>
    </location>
</feature>
<feature type="sequence conflict" description="In Ref. 1; AAL73342." evidence="4" ref="1">
    <original>G</original>
    <variation>A</variation>
    <location>
        <position position="280"/>
    </location>
</feature>
<keyword id="KW-0238">DNA-binding</keyword>
<keyword id="KW-0539">Nucleus</keyword>
<keyword id="KW-1185">Reference proteome</keyword>
<keyword id="KW-0804">Transcription</keyword>
<keyword id="KW-0805">Transcription regulation</keyword>
<reference key="1">
    <citation type="journal article" date="2002" name="Gene">
        <title>FOXD4a and FOXD4b, two new winged helix transcription factors, are expressed in human leukemia cell lines.</title>
        <authorList>
            <person name="Freyaldenhoven B.S."/>
            <person name="Fried C."/>
            <person name="Wielckens K."/>
        </authorList>
    </citation>
    <scope>NUCLEOTIDE SEQUENCE [GENOMIC DNA]</scope>
</reference>
<reference key="2">
    <citation type="journal article" date="2004" name="Genomics">
        <title>Diverse fates of paralogs following segmental duplication of telomeric genes.</title>
        <authorList>
            <person name="Wong A."/>
            <person name="Vallender E.J."/>
            <person name="Heretis K."/>
            <person name="Ilkin Y."/>
            <person name="Lahn B.T."/>
            <person name="Lese Martin C."/>
            <person name="Ledbetter D.H."/>
        </authorList>
    </citation>
    <scope>NUCLEOTIDE SEQUENCE [MRNA]</scope>
</reference>
<reference key="3">
    <citation type="journal article" date="2004" name="Nature">
        <title>DNA sequence and analysis of human chromosome 9.</title>
        <authorList>
            <person name="Humphray S.J."/>
            <person name="Oliver K."/>
            <person name="Hunt A.R."/>
            <person name="Plumb R.W."/>
            <person name="Loveland J.E."/>
            <person name="Howe K.L."/>
            <person name="Andrews T.D."/>
            <person name="Searle S."/>
            <person name="Hunt S.E."/>
            <person name="Scott C.E."/>
            <person name="Jones M.C."/>
            <person name="Ainscough R."/>
            <person name="Almeida J.P."/>
            <person name="Ambrose K.D."/>
            <person name="Ashwell R.I.S."/>
            <person name="Babbage A.K."/>
            <person name="Babbage S."/>
            <person name="Bagguley C.L."/>
            <person name="Bailey J."/>
            <person name="Banerjee R."/>
            <person name="Barker D.J."/>
            <person name="Barlow K.F."/>
            <person name="Bates K."/>
            <person name="Beasley H."/>
            <person name="Beasley O."/>
            <person name="Bird C.P."/>
            <person name="Bray-Allen S."/>
            <person name="Brown A.J."/>
            <person name="Brown J.Y."/>
            <person name="Burford D."/>
            <person name="Burrill W."/>
            <person name="Burton J."/>
            <person name="Carder C."/>
            <person name="Carter N.P."/>
            <person name="Chapman J.C."/>
            <person name="Chen Y."/>
            <person name="Clarke G."/>
            <person name="Clark S.Y."/>
            <person name="Clee C.M."/>
            <person name="Clegg S."/>
            <person name="Collier R.E."/>
            <person name="Corby N."/>
            <person name="Crosier M."/>
            <person name="Cummings A.T."/>
            <person name="Davies J."/>
            <person name="Dhami P."/>
            <person name="Dunn M."/>
            <person name="Dutta I."/>
            <person name="Dyer L.W."/>
            <person name="Earthrowl M.E."/>
            <person name="Faulkner L."/>
            <person name="Fleming C.J."/>
            <person name="Frankish A."/>
            <person name="Frankland J.A."/>
            <person name="French L."/>
            <person name="Fricker D.G."/>
            <person name="Garner P."/>
            <person name="Garnett J."/>
            <person name="Ghori J."/>
            <person name="Gilbert J.G.R."/>
            <person name="Glison C."/>
            <person name="Grafham D.V."/>
            <person name="Gribble S."/>
            <person name="Griffiths C."/>
            <person name="Griffiths-Jones S."/>
            <person name="Grocock R."/>
            <person name="Guy J."/>
            <person name="Hall R.E."/>
            <person name="Hammond S."/>
            <person name="Harley J.L."/>
            <person name="Harrison E.S.I."/>
            <person name="Hart E.A."/>
            <person name="Heath P.D."/>
            <person name="Henderson C.D."/>
            <person name="Hopkins B.L."/>
            <person name="Howard P.J."/>
            <person name="Howden P.J."/>
            <person name="Huckle E."/>
            <person name="Johnson C."/>
            <person name="Johnson D."/>
            <person name="Joy A.A."/>
            <person name="Kay M."/>
            <person name="Keenan S."/>
            <person name="Kershaw J.K."/>
            <person name="Kimberley A.M."/>
            <person name="King A."/>
            <person name="Knights A."/>
            <person name="Laird G.K."/>
            <person name="Langford C."/>
            <person name="Lawlor S."/>
            <person name="Leongamornlert D.A."/>
            <person name="Leversha M."/>
            <person name="Lloyd C."/>
            <person name="Lloyd D.M."/>
            <person name="Lovell J."/>
            <person name="Martin S."/>
            <person name="Mashreghi-Mohammadi M."/>
            <person name="Matthews L."/>
            <person name="McLaren S."/>
            <person name="McLay K.E."/>
            <person name="McMurray A."/>
            <person name="Milne S."/>
            <person name="Nickerson T."/>
            <person name="Nisbett J."/>
            <person name="Nordsiek G."/>
            <person name="Pearce A.V."/>
            <person name="Peck A.I."/>
            <person name="Porter K.M."/>
            <person name="Pandian R."/>
            <person name="Pelan S."/>
            <person name="Phillimore B."/>
            <person name="Povey S."/>
            <person name="Ramsey Y."/>
            <person name="Rand V."/>
            <person name="Scharfe M."/>
            <person name="Sehra H.K."/>
            <person name="Shownkeen R."/>
            <person name="Sims S.K."/>
            <person name="Skuce C.D."/>
            <person name="Smith M."/>
            <person name="Steward C.A."/>
            <person name="Swarbreck D."/>
            <person name="Sycamore N."/>
            <person name="Tester J."/>
            <person name="Thorpe A."/>
            <person name="Tracey A."/>
            <person name="Tromans A."/>
            <person name="Thomas D.W."/>
            <person name="Wall M."/>
            <person name="Wallis J.M."/>
            <person name="West A.P."/>
            <person name="Whitehead S.L."/>
            <person name="Willey D.L."/>
            <person name="Williams S.A."/>
            <person name="Wilming L."/>
            <person name="Wray P.W."/>
            <person name="Young L."/>
            <person name="Ashurst J.L."/>
            <person name="Coulson A."/>
            <person name="Blocker H."/>
            <person name="Durbin R.M."/>
            <person name="Sulston J.E."/>
            <person name="Hubbard T."/>
            <person name="Jackson M.J."/>
            <person name="Bentley D.R."/>
            <person name="Beck S."/>
            <person name="Rogers J."/>
            <person name="Dunham I."/>
        </authorList>
    </citation>
    <scope>NUCLEOTIDE SEQUENCE [LARGE SCALE GENOMIC DNA]</scope>
</reference>
<reference key="4">
    <citation type="journal article" date="2002" name="Genome Res.">
        <title>Gene content and function of the ancestral chromosome fusion site in human chromosome 2q13-2q14.1 and paralogous regions.</title>
        <authorList>
            <person name="Fan Y."/>
            <person name="Newman T."/>
            <person name="Linardopoulou E."/>
            <person name="Trask B.J."/>
        </authorList>
    </citation>
    <scope>IDENTIFICATION</scope>
</reference>